<proteinExistence type="inferred from homology"/>
<evidence type="ECO:0000255" key="1">
    <source>
        <dbReference type="HAMAP-Rule" id="MF_03111"/>
    </source>
</evidence>
<comment type="function">
    <text evidence="1">Lyase that catalyzes the C1-decarboxylation of 4-hydroxy-3-methoxy-5-(all-trans-polyprenyl)benzoic acid into 2-methoxy-6-(all-trans-polyprenyl)phenol during ubiquinone biosynthesis.</text>
</comment>
<comment type="catalytic activity">
    <reaction evidence="1">
        <text>a 4-hydroxy-3-methoxy-5-(all-trans-polyprenyl)benzoate + H(+) = a 2-methoxy-6-(all-trans-polyprenyl)phenol + CO2</text>
        <dbReference type="Rhea" id="RHEA:81179"/>
        <dbReference type="Rhea" id="RHEA-COMP:9551"/>
        <dbReference type="Rhea" id="RHEA-COMP:10931"/>
        <dbReference type="ChEBI" id="CHEBI:15378"/>
        <dbReference type="ChEBI" id="CHEBI:16526"/>
        <dbReference type="ChEBI" id="CHEBI:62731"/>
        <dbReference type="ChEBI" id="CHEBI:84443"/>
        <dbReference type="EC" id="4.1.1.130"/>
    </reaction>
</comment>
<comment type="cofactor">
    <cofactor evidence="1">
        <name>Zn(2+)</name>
        <dbReference type="ChEBI" id="CHEBI:29105"/>
    </cofactor>
</comment>
<comment type="pathway">
    <text evidence="1">Cofactor biosynthesis; ubiquinone biosynthesis.</text>
</comment>
<comment type="subunit">
    <text evidence="1">Component of a multi-subunit COQ enzyme complex, composed of at least coq3, coq4, coq5, coq6, coq7 and coq9.</text>
</comment>
<comment type="subcellular location">
    <subcellularLocation>
        <location evidence="1">Mitochondrion inner membrane</location>
        <topology evidence="1">Peripheral membrane protein</topology>
        <orientation evidence="1">Matrix side</orientation>
    </subcellularLocation>
</comment>
<comment type="similarity">
    <text evidence="1">Belongs to the COQ4 family.</text>
</comment>
<feature type="transit peptide" description="Mitochondrion" evidence="1">
    <location>
        <begin position="1"/>
        <end position="31"/>
    </location>
</feature>
<feature type="chain" id="PRO_0000388121" description="Ubiquinone biosynthesis protein coq4, mitochondrial">
    <location>
        <begin position="32"/>
        <end position="285"/>
    </location>
</feature>
<feature type="binding site" evidence="1">
    <location>
        <position position="167"/>
    </location>
    <ligand>
        <name>Zn(2+)</name>
        <dbReference type="ChEBI" id="CHEBI:29105"/>
    </ligand>
</feature>
<feature type="binding site" evidence="1">
    <location>
        <position position="168"/>
    </location>
    <ligand>
        <name>Zn(2+)</name>
        <dbReference type="ChEBI" id="CHEBI:29105"/>
    </ligand>
</feature>
<feature type="binding site" evidence="1">
    <location>
        <position position="171"/>
    </location>
    <ligand>
        <name>Zn(2+)</name>
        <dbReference type="ChEBI" id="CHEBI:29105"/>
    </ligand>
</feature>
<feature type="binding site" evidence="1">
    <location>
        <position position="183"/>
    </location>
    <ligand>
        <name>Zn(2+)</name>
        <dbReference type="ChEBI" id="CHEBI:29105"/>
    </ligand>
</feature>
<reference key="1">
    <citation type="journal article" date="2008" name="PLoS Genet.">
        <title>Genomic islands in the pathogenic filamentous fungus Aspergillus fumigatus.</title>
        <authorList>
            <person name="Fedorova N.D."/>
            <person name="Khaldi N."/>
            <person name="Joardar V.S."/>
            <person name="Maiti R."/>
            <person name="Amedeo P."/>
            <person name="Anderson M.J."/>
            <person name="Crabtree J."/>
            <person name="Silva J.C."/>
            <person name="Badger J.H."/>
            <person name="Albarraq A."/>
            <person name="Angiuoli S."/>
            <person name="Bussey H."/>
            <person name="Bowyer P."/>
            <person name="Cotty P.J."/>
            <person name="Dyer P.S."/>
            <person name="Egan A."/>
            <person name="Galens K."/>
            <person name="Fraser-Liggett C.M."/>
            <person name="Haas B.J."/>
            <person name="Inman J.M."/>
            <person name="Kent R."/>
            <person name="Lemieux S."/>
            <person name="Malavazi I."/>
            <person name="Orvis J."/>
            <person name="Roemer T."/>
            <person name="Ronning C.M."/>
            <person name="Sundaram J.P."/>
            <person name="Sutton G."/>
            <person name="Turner G."/>
            <person name="Venter J.C."/>
            <person name="White O.R."/>
            <person name="Whitty B.R."/>
            <person name="Youngman P."/>
            <person name="Wolfe K.H."/>
            <person name="Goldman G.H."/>
            <person name="Wortman J.R."/>
            <person name="Jiang B."/>
            <person name="Denning D.W."/>
            <person name="Nierman W.C."/>
        </authorList>
    </citation>
    <scope>NUCLEOTIDE SEQUENCE [LARGE SCALE GENOMIC DNA]</scope>
    <source>
        <strain>ATCC 1020 / DSM 3700 / CBS 544.65 / FGSC A1164 / JCM 1740 / NRRL 181 / WB 181</strain>
    </source>
</reference>
<keyword id="KW-0456">Lyase</keyword>
<keyword id="KW-0472">Membrane</keyword>
<keyword id="KW-0479">Metal-binding</keyword>
<keyword id="KW-0496">Mitochondrion</keyword>
<keyword id="KW-0999">Mitochondrion inner membrane</keyword>
<keyword id="KW-1185">Reference proteome</keyword>
<keyword id="KW-0809">Transit peptide</keyword>
<keyword id="KW-0831">Ubiquinone biosynthesis</keyword>
<keyword id="KW-0862">Zinc</keyword>
<dbReference type="EC" id="4.1.1.130" evidence="1"/>
<dbReference type="EMBL" id="DS027690">
    <property type="protein sequence ID" value="EAW21915.1"/>
    <property type="molecule type" value="Genomic_DNA"/>
</dbReference>
<dbReference type="RefSeq" id="XP_001263812.1">
    <property type="nucleotide sequence ID" value="XM_001263811.1"/>
</dbReference>
<dbReference type="SMR" id="A1D871"/>
<dbReference type="STRING" id="331117.A1D871"/>
<dbReference type="EnsemblFungi" id="EAW21915">
    <property type="protein sequence ID" value="EAW21915"/>
    <property type="gene ID" value="NFIA_070860"/>
</dbReference>
<dbReference type="GeneID" id="4590458"/>
<dbReference type="KEGG" id="nfi:NFIA_070860"/>
<dbReference type="VEuPathDB" id="FungiDB:NFIA_070860"/>
<dbReference type="eggNOG" id="KOG3244">
    <property type="taxonomic scope" value="Eukaryota"/>
</dbReference>
<dbReference type="HOGENOM" id="CLU_061241_0_0_1"/>
<dbReference type="OMA" id="YYERHFH"/>
<dbReference type="OrthoDB" id="4249at2759"/>
<dbReference type="UniPathway" id="UPA00232"/>
<dbReference type="Proteomes" id="UP000006702">
    <property type="component" value="Unassembled WGS sequence"/>
</dbReference>
<dbReference type="GO" id="GO:0031314">
    <property type="term" value="C:extrinsic component of mitochondrial inner membrane"/>
    <property type="evidence" value="ECO:0007669"/>
    <property type="project" value="UniProtKB-UniRule"/>
</dbReference>
<dbReference type="GO" id="GO:0006744">
    <property type="term" value="P:ubiquinone biosynthetic process"/>
    <property type="evidence" value="ECO:0007669"/>
    <property type="project" value="UniProtKB-UniRule"/>
</dbReference>
<dbReference type="HAMAP" id="MF_03111">
    <property type="entry name" value="Coq4"/>
    <property type="match status" value="1"/>
</dbReference>
<dbReference type="InterPro" id="IPR007715">
    <property type="entry name" value="Coq4"/>
</dbReference>
<dbReference type="InterPro" id="IPR027540">
    <property type="entry name" value="Coq4_euk"/>
</dbReference>
<dbReference type="PANTHER" id="PTHR12922">
    <property type="entry name" value="UBIQUINONE BIOSYNTHESIS PROTEIN"/>
    <property type="match status" value="1"/>
</dbReference>
<dbReference type="PANTHER" id="PTHR12922:SF7">
    <property type="entry name" value="UBIQUINONE BIOSYNTHESIS PROTEIN COQ4 HOMOLOG, MITOCHONDRIAL"/>
    <property type="match status" value="1"/>
</dbReference>
<dbReference type="Pfam" id="PF05019">
    <property type="entry name" value="Coq4"/>
    <property type="match status" value="1"/>
</dbReference>
<protein>
    <recommendedName>
        <fullName evidence="1">Ubiquinone biosynthesis protein coq4, mitochondrial</fullName>
    </recommendedName>
    <alternativeName>
        <fullName>4-hydroxy-3-methoxy-5-polyprenylbenzoate decarboxylase</fullName>
        <ecNumber evidence="1">4.1.1.130</ecNumber>
    </alternativeName>
    <alternativeName>
        <fullName evidence="1">Coenzyme Q biosynthesis protein 4</fullName>
    </alternativeName>
</protein>
<organism>
    <name type="scientific">Neosartorya fischeri (strain ATCC 1020 / DSM 3700 / CBS 544.65 / FGSC A1164 / JCM 1740 / NRRL 181 / WB 181)</name>
    <name type="common">Aspergillus fischerianus</name>
    <dbReference type="NCBI Taxonomy" id="331117"/>
    <lineage>
        <taxon>Eukaryota</taxon>
        <taxon>Fungi</taxon>
        <taxon>Dikarya</taxon>
        <taxon>Ascomycota</taxon>
        <taxon>Pezizomycotina</taxon>
        <taxon>Eurotiomycetes</taxon>
        <taxon>Eurotiomycetidae</taxon>
        <taxon>Eurotiales</taxon>
        <taxon>Aspergillaceae</taxon>
        <taxon>Aspergillus</taxon>
        <taxon>Aspergillus subgen. Fumigati</taxon>
    </lineage>
</organism>
<gene>
    <name type="primary">coq4</name>
    <name type="ORF">NFIA_070860</name>
</gene>
<sequence>MSVLGRRGAGLAARGPTLAPLATASYLIRSFSALNRPPPKYPGHVPLTFLERGALAVGSAVGSLMNPRRADLIAALGEATATPYFIYRLRDAMLSDATGRRILRDRPRITSETLKLPYLRTLPENSVGRTYATWLDREGVSPDTRDSVKYIDDEECAYAMQRYRECHDFYHAVTGLPIFVEGELALKAFEFLNTLIPMTGLSIFAFVRLKPAERERFFSLHLPWAVRSGLASKELINVYWEEILEKDVDELRKELGIERPPDLREIRKLMRQQQKREKERLEGKS</sequence>
<accession>A1D871</accession>
<name>COQ4_NEOFI</name>